<name>FBX24_MOUSE</name>
<feature type="chain" id="PRO_0000119910" description="F-box only protein 24">
    <location>
        <begin position="1"/>
        <end position="589"/>
    </location>
</feature>
<feature type="domain" description="F-box" evidence="2">
    <location>
        <begin position="23"/>
        <end position="69"/>
    </location>
</feature>
<feature type="repeat" description="RCC1">
    <location>
        <begin position="386"/>
        <end position="435"/>
    </location>
</feature>
<feature type="region of interest" description="Disordered" evidence="3">
    <location>
        <begin position="506"/>
        <end position="526"/>
    </location>
</feature>
<dbReference type="EMBL" id="AK016870">
    <property type="protein sequence ID" value="BAB30476.1"/>
    <property type="molecule type" value="mRNA"/>
</dbReference>
<dbReference type="CCDS" id="CCDS51674.1"/>
<dbReference type="RefSeq" id="NP_081984.1">
    <property type="nucleotide sequence ID" value="NM_027708.1"/>
</dbReference>
<dbReference type="RefSeq" id="XP_006504682.1">
    <property type="nucleotide sequence ID" value="XM_006504619.3"/>
</dbReference>
<dbReference type="SMR" id="Q9D417"/>
<dbReference type="BioGRID" id="214532">
    <property type="interactions" value="3"/>
</dbReference>
<dbReference type="FunCoup" id="Q9D417">
    <property type="interactions" value="4"/>
</dbReference>
<dbReference type="STRING" id="10090.ENSMUSP00000031732"/>
<dbReference type="PhosphoSitePlus" id="Q9D417"/>
<dbReference type="PaxDb" id="10090-ENSMUSP00000031732"/>
<dbReference type="ProteomicsDB" id="267349"/>
<dbReference type="Antibodypedia" id="30754">
    <property type="antibodies" value="220 antibodies from 22 providers"/>
</dbReference>
<dbReference type="DNASU" id="71176"/>
<dbReference type="Ensembl" id="ENSMUST00000031732.14">
    <property type="protein sequence ID" value="ENSMUSP00000031732.8"/>
    <property type="gene ID" value="ENSMUSG00000089984.8"/>
</dbReference>
<dbReference type="GeneID" id="71176"/>
<dbReference type="KEGG" id="mmu:71176"/>
<dbReference type="UCSC" id="uc009adc.1">
    <property type="organism name" value="mouse"/>
</dbReference>
<dbReference type="AGR" id="MGI:1918426"/>
<dbReference type="CTD" id="26261"/>
<dbReference type="MGI" id="MGI:1918426">
    <property type="gene designation" value="Fbxo24"/>
</dbReference>
<dbReference type="VEuPathDB" id="HostDB:ENSMUSG00000089984"/>
<dbReference type="eggNOG" id="KOG0274">
    <property type="taxonomic scope" value="Eukaryota"/>
</dbReference>
<dbReference type="GeneTree" id="ENSGT00390000017455"/>
<dbReference type="InParanoid" id="Q9D417"/>
<dbReference type="OMA" id="DFFWQAL"/>
<dbReference type="OrthoDB" id="101791at2759"/>
<dbReference type="PhylomeDB" id="Q9D417"/>
<dbReference type="TreeFam" id="TF328722"/>
<dbReference type="BioGRID-ORCS" id="71176">
    <property type="hits" value="1 hit in 76 CRISPR screens"/>
</dbReference>
<dbReference type="ChiTaRS" id="Fbxo24">
    <property type="organism name" value="mouse"/>
</dbReference>
<dbReference type="PRO" id="PR:Q9D417"/>
<dbReference type="Proteomes" id="UP000000589">
    <property type="component" value="Chromosome 5"/>
</dbReference>
<dbReference type="RNAct" id="Q9D417">
    <property type="molecule type" value="protein"/>
</dbReference>
<dbReference type="Bgee" id="ENSMUSG00000089984">
    <property type="expression patterns" value="Expressed in spermatid and 26 other cell types or tissues"/>
</dbReference>
<dbReference type="ExpressionAtlas" id="Q9D417">
    <property type="expression patterns" value="baseline and differential"/>
</dbReference>
<dbReference type="GO" id="GO:0019005">
    <property type="term" value="C:SCF ubiquitin ligase complex"/>
    <property type="evidence" value="ECO:0000314"/>
    <property type="project" value="MGI"/>
</dbReference>
<dbReference type="GO" id="GO:0035082">
    <property type="term" value="P:axoneme assembly"/>
    <property type="evidence" value="ECO:0000315"/>
    <property type="project" value="MGI"/>
</dbReference>
<dbReference type="GO" id="GO:0006325">
    <property type="term" value="P:chromatin organization"/>
    <property type="evidence" value="ECO:0000315"/>
    <property type="project" value="MGI"/>
</dbReference>
<dbReference type="GO" id="GO:0044782">
    <property type="term" value="P:cilium organization"/>
    <property type="evidence" value="ECO:0000315"/>
    <property type="project" value="MGI"/>
</dbReference>
<dbReference type="GO" id="GO:0007005">
    <property type="term" value="P:mitochondrion organization"/>
    <property type="evidence" value="ECO:0000315"/>
    <property type="project" value="MGI"/>
</dbReference>
<dbReference type="GO" id="GO:0000398">
    <property type="term" value="P:mRNA splicing, via spliceosome"/>
    <property type="evidence" value="ECO:0000315"/>
    <property type="project" value="MGI"/>
</dbReference>
<dbReference type="GO" id="GO:0034587">
    <property type="term" value="P:piRNA processing"/>
    <property type="evidence" value="ECO:0000315"/>
    <property type="project" value="MGI"/>
</dbReference>
<dbReference type="GO" id="GO:0030163">
    <property type="term" value="P:protein catabolic process"/>
    <property type="evidence" value="ECO:0000314"/>
    <property type="project" value="MGI"/>
</dbReference>
<dbReference type="GO" id="GO:0007338">
    <property type="term" value="P:single fertilization"/>
    <property type="evidence" value="ECO:0000315"/>
    <property type="project" value="MGI"/>
</dbReference>
<dbReference type="GO" id="GO:0007283">
    <property type="term" value="P:spermatogenesis"/>
    <property type="evidence" value="ECO:0000315"/>
    <property type="project" value="MGI"/>
</dbReference>
<dbReference type="CDD" id="cd22098">
    <property type="entry name" value="F-box_FBXO24"/>
    <property type="match status" value="1"/>
</dbReference>
<dbReference type="Gene3D" id="1.20.1280.50">
    <property type="match status" value="1"/>
</dbReference>
<dbReference type="Gene3D" id="2.130.10.30">
    <property type="entry name" value="Regulator of chromosome condensation 1/beta-lactamase-inhibitor protein II"/>
    <property type="match status" value="1"/>
</dbReference>
<dbReference type="InterPro" id="IPR036047">
    <property type="entry name" value="F-box-like_dom_sf"/>
</dbReference>
<dbReference type="InterPro" id="IPR001810">
    <property type="entry name" value="F-box_dom"/>
</dbReference>
<dbReference type="InterPro" id="IPR052866">
    <property type="entry name" value="F-box_protein_24"/>
</dbReference>
<dbReference type="InterPro" id="IPR009091">
    <property type="entry name" value="RCC1/BLIP-II"/>
</dbReference>
<dbReference type="InterPro" id="IPR000408">
    <property type="entry name" value="Reg_chr_condens"/>
</dbReference>
<dbReference type="PANTHER" id="PTHR47004">
    <property type="entry name" value="F-BOX ONLY PROTEIN 24"/>
    <property type="match status" value="1"/>
</dbReference>
<dbReference type="PANTHER" id="PTHR47004:SF1">
    <property type="entry name" value="F-BOX ONLY PROTEIN 24"/>
    <property type="match status" value="1"/>
</dbReference>
<dbReference type="Pfam" id="PF12937">
    <property type="entry name" value="F-box-like"/>
    <property type="match status" value="1"/>
</dbReference>
<dbReference type="Pfam" id="PF00415">
    <property type="entry name" value="RCC1"/>
    <property type="match status" value="1"/>
</dbReference>
<dbReference type="SMART" id="SM00256">
    <property type="entry name" value="FBOX"/>
    <property type="match status" value="1"/>
</dbReference>
<dbReference type="SUPFAM" id="SSF81383">
    <property type="entry name" value="F-box domain"/>
    <property type="match status" value="1"/>
</dbReference>
<dbReference type="SUPFAM" id="SSF50985">
    <property type="entry name" value="RCC1/BLIP-II"/>
    <property type="match status" value="1"/>
</dbReference>
<dbReference type="PROSITE" id="PS50181">
    <property type="entry name" value="FBOX"/>
    <property type="match status" value="1"/>
</dbReference>
<dbReference type="PROSITE" id="PS50012">
    <property type="entry name" value="RCC1_3"/>
    <property type="match status" value="1"/>
</dbReference>
<sequence length="589" mass="65429">MVKRSCPSCGLEAGSEKKERGNPISVQLFPPELVEHIVSFLPVKDLVALGQTCHYFHEVCDAEGVWRRICRRLSPRIRDQSSGARPWKRAAILNYTKGLYFQAFGGRRRCLSKSVAPMLAHGYRRFLPTKDHVFILDYVGTLFFLKNALVSSTLGQIQWKRACRYVVLCRGAKDFASDPRCDTVYRKYLYVLATREQPAVVGTTGSRACDCVEVYLQSSGQRVFKMTFHHSMSFKQIVLVGQETQRALLLLTEEGKIYSLVVNETQLDQPRSYTVQLALRKVSRCLPHLRVTCMASNQSSTLYITGGTLIPRKQVPKAAELRAPDPPDQGGVYFEVHTPGVYRDLFGTLQAFDPLDHQMPLALSLPAKVLFCALGYNHLGLVDEFGRIFMQGNNRYGQLGTGDKMDRGEPTQVHYLQRPIALWCGLNHSLVLSQTSDFSKELLGCGCGAGGRLPGWPKGSASFVKLHIKVPLCACSLCSTRECLYMLSSHDIEQCPVYRDLPASRVGGSPEPSQGAGAPQDPGGTAQACEEYLSQIHSCPTLQDRMEKMKEIVGWMPLMAAQKDFFWEALDMLQRAAGGAGPDTSTPES</sequence>
<accession>Q9D417</accession>
<keyword id="KW-1185">Reference proteome</keyword>
<keyword id="KW-0833">Ubl conjugation pathway</keyword>
<proteinExistence type="evidence at transcript level"/>
<reference key="1">
    <citation type="journal article" date="2005" name="Science">
        <title>The transcriptional landscape of the mammalian genome.</title>
        <authorList>
            <person name="Carninci P."/>
            <person name="Kasukawa T."/>
            <person name="Katayama S."/>
            <person name="Gough J."/>
            <person name="Frith M.C."/>
            <person name="Maeda N."/>
            <person name="Oyama R."/>
            <person name="Ravasi T."/>
            <person name="Lenhard B."/>
            <person name="Wells C."/>
            <person name="Kodzius R."/>
            <person name="Shimokawa K."/>
            <person name="Bajic V.B."/>
            <person name="Brenner S.E."/>
            <person name="Batalov S."/>
            <person name="Forrest A.R."/>
            <person name="Zavolan M."/>
            <person name="Davis M.J."/>
            <person name="Wilming L.G."/>
            <person name="Aidinis V."/>
            <person name="Allen J.E."/>
            <person name="Ambesi-Impiombato A."/>
            <person name="Apweiler R."/>
            <person name="Aturaliya R.N."/>
            <person name="Bailey T.L."/>
            <person name="Bansal M."/>
            <person name="Baxter L."/>
            <person name="Beisel K.W."/>
            <person name="Bersano T."/>
            <person name="Bono H."/>
            <person name="Chalk A.M."/>
            <person name="Chiu K.P."/>
            <person name="Choudhary V."/>
            <person name="Christoffels A."/>
            <person name="Clutterbuck D.R."/>
            <person name="Crowe M.L."/>
            <person name="Dalla E."/>
            <person name="Dalrymple B.P."/>
            <person name="de Bono B."/>
            <person name="Della Gatta G."/>
            <person name="di Bernardo D."/>
            <person name="Down T."/>
            <person name="Engstrom P."/>
            <person name="Fagiolini M."/>
            <person name="Faulkner G."/>
            <person name="Fletcher C.F."/>
            <person name="Fukushima T."/>
            <person name="Furuno M."/>
            <person name="Futaki S."/>
            <person name="Gariboldi M."/>
            <person name="Georgii-Hemming P."/>
            <person name="Gingeras T.R."/>
            <person name="Gojobori T."/>
            <person name="Green R.E."/>
            <person name="Gustincich S."/>
            <person name="Harbers M."/>
            <person name="Hayashi Y."/>
            <person name="Hensch T.K."/>
            <person name="Hirokawa N."/>
            <person name="Hill D."/>
            <person name="Huminiecki L."/>
            <person name="Iacono M."/>
            <person name="Ikeo K."/>
            <person name="Iwama A."/>
            <person name="Ishikawa T."/>
            <person name="Jakt M."/>
            <person name="Kanapin A."/>
            <person name="Katoh M."/>
            <person name="Kawasawa Y."/>
            <person name="Kelso J."/>
            <person name="Kitamura H."/>
            <person name="Kitano H."/>
            <person name="Kollias G."/>
            <person name="Krishnan S.P."/>
            <person name="Kruger A."/>
            <person name="Kummerfeld S.K."/>
            <person name="Kurochkin I.V."/>
            <person name="Lareau L.F."/>
            <person name="Lazarevic D."/>
            <person name="Lipovich L."/>
            <person name="Liu J."/>
            <person name="Liuni S."/>
            <person name="McWilliam S."/>
            <person name="Madan Babu M."/>
            <person name="Madera M."/>
            <person name="Marchionni L."/>
            <person name="Matsuda H."/>
            <person name="Matsuzawa S."/>
            <person name="Miki H."/>
            <person name="Mignone F."/>
            <person name="Miyake S."/>
            <person name="Morris K."/>
            <person name="Mottagui-Tabar S."/>
            <person name="Mulder N."/>
            <person name="Nakano N."/>
            <person name="Nakauchi H."/>
            <person name="Ng P."/>
            <person name="Nilsson R."/>
            <person name="Nishiguchi S."/>
            <person name="Nishikawa S."/>
            <person name="Nori F."/>
            <person name="Ohara O."/>
            <person name="Okazaki Y."/>
            <person name="Orlando V."/>
            <person name="Pang K.C."/>
            <person name="Pavan W.J."/>
            <person name="Pavesi G."/>
            <person name="Pesole G."/>
            <person name="Petrovsky N."/>
            <person name="Piazza S."/>
            <person name="Reed J."/>
            <person name="Reid J.F."/>
            <person name="Ring B.Z."/>
            <person name="Ringwald M."/>
            <person name="Rost B."/>
            <person name="Ruan Y."/>
            <person name="Salzberg S.L."/>
            <person name="Sandelin A."/>
            <person name="Schneider C."/>
            <person name="Schoenbach C."/>
            <person name="Sekiguchi K."/>
            <person name="Semple C.A."/>
            <person name="Seno S."/>
            <person name="Sessa L."/>
            <person name="Sheng Y."/>
            <person name="Shibata Y."/>
            <person name="Shimada H."/>
            <person name="Shimada K."/>
            <person name="Silva D."/>
            <person name="Sinclair B."/>
            <person name="Sperling S."/>
            <person name="Stupka E."/>
            <person name="Sugiura K."/>
            <person name="Sultana R."/>
            <person name="Takenaka Y."/>
            <person name="Taki K."/>
            <person name="Tammoja K."/>
            <person name="Tan S.L."/>
            <person name="Tang S."/>
            <person name="Taylor M.S."/>
            <person name="Tegner J."/>
            <person name="Teichmann S.A."/>
            <person name="Ueda H.R."/>
            <person name="van Nimwegen E."/>
            <person name="Verardo R."/>
            <person name="Wei C.L."/>
            <person name="Yagi K."/>
            <person name="Yamanishi H."/>
            <person name="Zabarovsky E."/>
            <person name="Zhu S."/>
            <person name="Zimmer A."/>
            <person name="Hide W."/>
            <person name="Bult C."/>
            <person name="Grimmond S.M."/>
            <person name="Teasdale R.D."/>
            <person name="Liu E.T."/>
            <person name="Brusic V."/>
            <person name="Quackenbush J."/>
            <person name="Wahlestedt C."/>
            <person name="Mattick J.S."/>
            <person name="Hume D.A."/>
            <person name="Kai C."/>
            <person name="Sasaki D."/>
            <person name="Tomaru Y."/>
            <person name="Fukuda S."/>
            <person name="Kanamori-Katayama M."/>
            <person name="Suzuki M."/>
            <person name="Aoki J."/>
            <person name="Arakawa T."/>
            <person name="Iida J."/>
            <person name="Imamura K."/>
            <person name="Itoh M."/>
            <person name="Kato T."/>
            <person name="Kawaji H."/>
            <person name="Kawagashira N."/>
            <person name="Kawashima T."/>
            <person name="Kojima M."/>
            <person name="Kondo S."/>
            <person name="Konno H."/>
            <person name="Nakano K."/>
            <person name="Ninomiya N."/>
            <person name="Nishio T."/>
            <person name="Okada M."/>
            <person name="Plessy C."/>
            <person name="Shibata K."/>
            <person name="Shiraki T."/>
            <person name="Suzuki S."/>
            <person name="Tagami M."/>
            <person name="Waki K."/>
            <person name="Watahiki A."/>
            <person name="Okamura-Oho Y."/>
            <person name="Suzuki H."/>
            <person name="Kawai J."/>
            <person name="Hayashizaki Y."/>
        </authorList>
    </citation>
    <scope>NUCLEOTIDE SEQUENCE [LARGE SCALE MRNA]</scope>
    <source>
        <strain>C57BL/6J</strain>
        <tissue>Testis</tissue>
    </source>
</reference>
<comment type="function">
    <text evidence="1">Substrate-recognition component of the SCF (SKP1-CUL1-F-box protein)-type E3 ubiquitin ligase complex.</text>
</comment>
<comment type="subunit">
    <text evidence="1">Directly interacts with SKP1 and CUL1.</text>
</comment>
<protein>
    <recommendedName>
        <fullName>F-box only protein 24</fullName>
    </recommendedName>
</protein>
<organism>
    <name type="scientific">Mus musculus</name>
    <name type="common">Mouse</name>
    <dbReference type="NCBI Taxonomy" id="10090"/>
    <lineage>
        <taxon>Eukaryota</taxon>
        <taxon>Metazoa</taxon>
        <taxon>Chordata</taxon>
        <taxon>Craniata</taxon>
        <taxon>Vertebrata</taxon>
        <taxon>Euteleostomi</taxon>
        <taxon>Mammalia</taxon>
        <taxon>Eutheria</taxon>
        <taxon>Euarchontoglires</taxon>
        <taxon>Glires</taxon>
        <taxon>Rodentia</taxon>
        <taxon>Myomorpha</taxon>
        <taxon>Muroidea</taxon>
        <taxon>Muridae</taxon>
        <taxon>Murinae</taxon>
        <taxon>Mus</taxon>
        <taxon>Mus</taxon>
    </lineage>
</organism>
<evidence type="ECO:0000250" key="1"/>
<evidence type="ECO:0000255" key="2">
    <source>
        <dbReference type="PROSITE-ProRule" id="PRU00080"/>
    </source>
</evidence>
<evidence type="ECO:0000256" key="3">
    <source>
        <dbReference type="SAM" id="MobiDB-lite"/>
    </source>
</evidence>
<gene>
    <name type="primary">Fbxo24</name>
    <name type="synonym">Fbx24</name>
</gene>